<comment type="similarity">
    <text evidence="1">Belongs to the RutC family.</text>
</comment>
<comment type="sequence caution" evidence="1">
    <conflict type="erroneous initiation">
        <sequence resource="EMBL-CDS" id="AAN43020"/>
    </conflict>
</comment>
<comment type="sequence caution" evidence="1">
    <conflict type="erroneous initiation">
        <sequence resource="EMBL-CDS" id="AAP16915"/>
    </conflict>
</comment>
<accession>P0AEB9</accession>
<accession>P76258</accession>
<gene>
    <name type="primary">yoaB</name>
    <name type="ordered locus">SF1419</name>
    <name type="ordered locus">S1534</name>
</gene>
<reference key="1">
    <citation type="journal article" date="2002" name="Nucleic Acids Res.">
        <title>Genome sequence of Shigella flexneri 2a: insights into pathogenicity through comparison with genomes of Escherichia coli K12 and O157.</title>
        <authorList>
            <person name="Jin Q."/>
            <person name="Yuan Z."/>
            <person name="Xu J."/>
            <person name="Wang Y."/>
            <person name="Shen Y."/>
            <person name="Lu W."/>
            <person name="Wang J."/>
            <person name="Liu H."/>
            <person name="Yang J."/>
            <person name="Yang F."/>
            <person name="Zhang X."/>
            <person name="Zhang J."/>
            <person name="Yang G."/>
            <person name="Wu H."/>
            <person name="Qu D."/>
            <person name="Dong J."/>
            <person name="Sun L."/>
            <person name="Xue Y."/>
            <person name="Zhao A."/>
            <person name="Gao Y."/>
            <person name="Zhu J."/>
            <person name="Kan B."/>
            <person name="Ding K."/>
            <person name="Chen S."/>
            <person name="Cheng H."/>
            <person name="Yao Z."/>
            <person name="He B."/>
            <person name="Chen R."/>
            <person name="Ma D."/>
            <person name="Qiang B."/>
            <person name="Wen Y."/>
            <person name="Hou Y."/>
            <person name="Yu J."/>
        </authorList>
    </citation>
    <scope>NUCLEOTIDE SEQUENCE [LARGE SCALE GENOMIC DNA]</scope>
    <source>
        <strain>301 / Serotype 2a</strain>
    </source>
</reference>
<reference key="2">
    <citation type="journal article" date="2003" name="Infect. Immun.">
        <title>Complete genome sequence and comparative genomics of Shigella flexneri serotype 2a strain 2457T.</title>
        <authorList>
            <person name="Wei J."/>
            <person name="Goldberg M.B."/>
            <person name="Burland V."/>
            <person name="Venkatesan M.M."/>
            <person name="Deng W."/>
            <person name="Fournier G."/>
            <person name="Mayhew G.F."/>
            <person name="Plunkett G. III"/>
            <person name="Rose D.J."/>
            <person name="Darling A."/>
            <person name="Mau B."/>
            <person name="Perna N.T."/>
            <person name="Payne S.M."/>
            <person name="Runyen-Janecky L.J."/>
            <person name="Zhou S."/>
            <person name="Schwartz D.C."/>
            <person name="Blattner F.R."/>
        </authorList>
    </citation>
    <scope>NUCLEOTIDE SEQUENCE [LARGE SCALE GENOMIC DNA]</scope>
    <source>
        <strain>ATCC 700930 / 2457T / Serotype 2a</strain>
    </source>
</reference>
<feature type="chain" id="PRO_0000170328" description="RutC family protein YoaB">
    <location>
        <begin position="1"/>
        <end position="114"/>
    </location>
</feature>
<sequence>MTIVRIDAEARWSDVVIHNNTLYYTGVPENLDADAFEQTANTLAQIDAVLEKQGSNKSSILDATIFLADKNDFAAMNKAWDAWVVAGHAPVRCTVQAGLMNPKYKVEIKIVAAV</sequence>
<name>YOAB_SHIFL</name>
<evidence type="ECO:0000305" key="1"/>
<proteinExistence type="inferred from homology"/>
<keyword id="KW-1185">Reference proteome</keyword>
<dbReference type="EMBL" id="AE005674">
    <property type="protein sequence ID" value="AAN43020.1"/>
    <property type="status" value="ALT_INIT"/>
    <property type="molecule type" value="Genomic_DNA"/>
</dbReference>
<dbReference type="EMBL" id="AE014073">
    <property type="protein sequence ID" value="AAP16915.1"/>
    <property type="status" value="ALT_INIT"/>
    <property type="molecule type" value="Genomic_DNA"/>
</dbReference>
<dbReference type="RefSeq" id="NP_707313.1">
    <property type="nucleotide sequence ID" value="NC_004337.2"/>
</dbReference>
<dbReference type="RefSeq" id="WP_001295493.1">
    <property type="nucleotide sequence ID" value="NZ_WPGW01000062.1"/>
</dbReference>
<dbReference type="SMR" id="P0AEB9"/>
<dbReference type="STRING" id="198214.SF1419"/>
<dbReference type="PaxDb" id="198214-SF1419"/>
<dbReference type="DNASU" id="1077908"/>
<dbReference type="GeneID" id="1024606"/>
<dbReference type="KEGG" id="sfl:SF1419"/>
<dbReference type="KEGG" id="sfx:S1534"/>
<dbReference type="PATRIC" id="fig|198214.7.peg.1672"/>
<dbReference type="HOGENOM" id="CLU_100715_6_1_6"/>
<dbReference type="Proteomes" id="UP000001006">
    <property type="component" value="Chromosome"/>
</dbReference>
<dbReference type="Proteomes" id="UP000002673">
    <property type="component" value="Chromosome"/>
</dbReference>
<dbReference type="CDD" id="cd06150">
    <property type="entry name" value="YjgF_YER057c_UK114_like_2"/>
    <property type="match status" value="1"/>
</dbReference>
<dbReference type="FunFam" id="3.30.1330.40:FF:000002">
    <property type="entry name" value="Endoribonuclease L-PSP family protein"/>
    <property type="match status" value="1"/>
</dbReference>
<dbReference type="Gene3D" id="3.30.1330.40">
    <property type="entry name" value="RutC-like"/>
    <property type="match status" value="1"/>
</dbReference>
<dbReference type="InterPro" id="IPR019897">
    <property type="entry name" value="RidA_CS"/>
</dbReference>
<dbReference type="InterPro" id="IPR035959">
    <property type="entry name" value="RutC-like_sf"/>
</dbReference>
<dbReference type="InterPro" id="IPR006175">
    <property type="entry name" value="YjgF/YER057c/UK114"/>
</dbReference>
<dbReference type="InterPro" id="IPR035709">
    <property type="entry name" value="YoaB-like"/>
</dbReference>
<dbReference type="PANTHER" id="PTHR47328">
    <property type="match status" value="1"/>
</dbReference>
<dbReference type="PANTHER" id="PTHR47328:SF1">
    <property type="entry name" value="RUTC FAMILY PROTEIN YOAB"/>
    <property type="match status" value="1"/>
</dbReference>
<dbReference type="Pfam" id="PF01042">
    <property type="entry name" value="Ribonuc_L-PSP"/>
    <property type="match status" value="1"/>
</dbReference>
<dbReference type="SUPFAM" id="SSF55298">
    <property type="entry name" value="YjgF-like"/>
    <property type="match status" value="1"/>
</dbReference>
<dbReference type="PROSITE" id="PS01094">
    <property type="entry name" value="UPF0076"/>
    <property type="match status" value="1"/>
</dbReference>
<organism>
    <name type="scientific">Shigella flexneri</name>
    <dbReference type="NCBI Taxonomy" id="623"/>
    <lineage>
        <taxon>Bacteria</taxon>
        <taxon>Pseudomonadati</taxon>
        <taxon>Pseudomonadota</taxon>
        <taxon>Gammaproteobacteria</taxon>
        <taxon>Enterobacterales</taxon>
        <taxon>Enterobacteriaceae</taxon>
        <taxon>Shigella</taxon>
    </lineage>
</organism>
<protein>
    <recommendedName>
        <fullName>RutC family protein YoaB</fullName>
    </recommendedName>
</protein>